<proteinExistence type="inferred from homology"/>
<comment type="function">
    <text evidence="1">Component of the proteasome core, a large protease complex with broad specificity involved in protein degradation.</text>
</comment>
<comment type="catalytic activity">
    <reaction evidence="1">
        <text>Cleavage of peptide bonds with very broad specificity.</text>
        <dbReference type="EC" id="3.4.25.1"/>
    </reaction>
</comment>
<comment type="activity regulation">
    <text evidence="1">The formation of the proteasomal ATPase PAN-20S proteasome complex, via the docking of the C-termini of PAN into the intersubunit pockets in the alpha-rings, triggers opening of the gate for substrate entry. Interconversion between the open-gate and close-gate conformations leads to a dynamic regulation of the 20S proteasome proteolysis activity.</text>
</comment>
<comment type="subunit">
    <text evidence="1">The 20S proteasome core is composed of 14 alpha and 14 beta subunits that assemble into four stacked heptameric rings, resulting in a barrel-shaped structure. The two inner rings, each composed of seven catalytic beta subunits, are sandwiched by two outer rings, each composed of seven alpha subunits. The catalytic chamber with the active sites is on the inside of the barrel. Has a gated structure, the ends of the cylinder being occluded by the N-termini of the alpha-subunits. Is capped at one or both ends by the proteasome regulatory ATPase, PAN.</text>
</comment>
<comment type="subcellular location">
    <subcellularLocation>
        <location evidence="1">Cytoplasm</location>
    </subcellularLocation>
</comment>
<comment type="similarity">
    <text evidence="1">Belongs to the peptidase T1B family.</text>
</comment>
<accession>D3S8M7</accession>
<feature type="propeptide" id="PRO_0000397336" description="Removed in mature form; by autocatalysis" evidence="1">
    <location>
        <begin position="1"/>
        <end position="6"/>
    </location>
</feature>
<feature type="chain" id="PRO_0000397337" description="Proteasome subunit beta">
    <location>
        <begin position="7"/>
        <end position="224"/>
    </location>
</feature>
<feature type="active site" description="Nucleophile" evidence="1">
    <location>
        <position position="7"/>
    </location>
</feature>
<gene>
    <name evidence="1" type="primary">psmB</name>
    <name type="ordered locus">MFS40622_0701</name>
</gene>
<dbReference type="EC" id="3.4.25.1" evidence="1"/>
<dbReference type="EMBL" id="CP001901">
    <property type="protein sequence ID" value="ADC69387.1"/>
    <property type="molecule type" value="Genomic_DNA"/>
</dbReference>
<dbReference type="RefSeq" id="WP_012980297.1">
    <property type="nucleotide sequence ID" value="NC_013887.1"/>
</dbReference>
<dbReference type="SMR" id="D3S8M7"/>
<dbReference type="STRING" id="644281.MFS40622_0701"/>
<dbReference type="MEROPS" id="T01.002"/>
<dbReference type="GeneID" id="8804542"/>
<dbReference type="KEGG" id="mfs:MFS40622_0701"/>
<dbReference type="eggNOG" id="arCOG00970">
    <property type="taxonomic scope" value="Archaea"/>
</dbReference>
<dbReference type="HOGENOM" id="CLU_035750_7_2_2"/>
<dbReference type="OrthoDB" id="6330at2157"/>
<dbReference type="Proteomes" id="UP000002189">
    <property type="component" value="Chromosome"/>
</dbReference>
<dbReference type="GO" id="GO:0005737">
    <property type="term" value="C:cytoplasm"/>
    <property type="evidence" value="ECO:0007669"/>
    <property type="project" value="UniProtKB-SubCell"/>
</dbReference>
<dbReference type="GO" id="GO:0019774">
    <property type="term" value="C:proteasome core complex, beta-subunit complex"/>
    <property type="evidence" value="ECO:0007669"/>
    <property type="project" value="UniProtKB-UniRule"/>
</dbReference>
<dbReference type="GO" id="GO:0004298">
    <property type="term" value="F:threonine-type endopeptidase activity"/>
    <property type="evidence" value="ECO:0007669"/>
    <property type="project" value="UniProtKB-UniRule"/>
</dbReference>
<dbReference type="GO" id="GO:0010498">
    <property type="term" value="P:proteasomal protein catabolic process"/>
    <property type="evidence" value="ECO:0007669"/>
    <property type="project" value="UniProtKB-UniRule"/>
</dbReference>
<dbReference type="CDD" id="cd03764">
    <property type="entry name" value="proteasome_beta_archeal"/>
    <property type="match status" value="1"/>
</dbReference>
<dbReference type="FunFam" id="3.60.20.10:FF:000049">
    <property type="entry name" value="Proteasome subunit beta"/>
    <property type="match status" value="1"/>
</dbReference>
<dbReference type="Gene3D" id="3.60.20.10">
    <property type="entry name" value="Glutamine Phosphoribosylpyrophosphate, subunit 1, domain 1"/>
    <property type="match status" value="1"/>
</dbReference>
<dbReference type="HAMAP" id="MF_02113_A">
    <property type="entry name" value="Proteasome_B_A"/>
    <property type="match status" value="1"/>
</dbReference>
<dbReference type="InterPro" id="IPR029055">
    <property type="entry name" value="Ntn_hydrolases_N"/>
</dbReference>
<dbReference type="InterPro" id="IPR019983">
    <property type="entry name" value="Pept_T1A_Psome_bsu_arc"/>
</dbReference>
<dbReference type="InterPro" id="IPR000243">
    <property type="entry name" value="Pept_T1A_subB"/>
</dbReference>
<dbReference type="InterPro" id="IPR016050">
    <property type="entry name" value="Proteasome_bsu_CS"/>
</dbReference>
<dbReference type="InterPro" id="IPR001353">
    <property type="entry name" value="Proteasome_sua/b"/>
</dbReference>
<dbReference type="InterPro" id="IPR023333">
    <property type="entry name" value="Proteasome_suB-type"/>
</dbReference>
<dbReference type="NCBIfam" id="TIGR03634">
    <property type="entry name" value="arc_protsome_B"/>
    <property type="match status" value="1"/>
</dbReference>
<dbReference type="PANTHER" id="PTHR32194:SF0">
    <property type="entry name" value="ATP-DEPENDENT PROTEASE SUBUNIT HSLV"/>
    <property type="match status" value="1"/>
</dbReference>
<dbReference type="PANTHER" id="PTHR32194">
    <property type="entry name" value="METALLOPROTEASE TLDD"/>
    <property type="match status" value="1"/>
</dbReference>
<dbReference type="Pfam" id="PF00227">
    <property type="entry name" value="Proteasome"/>
    <property type="match status" value="1"/>
</dbReference>
<dbReference type="PRINTS" id="PR00141">
    <property type="entry name" value="PROTEASOME"/>
</dbReference>
<dbReference type="SUPFAM" id="SSF56235">
    <property type="entry name" value="N-terminal nucleophile aminohydrolases (Ntn hydrolases)"/>
    <property type="match status" value="1"/>
</dbReference>
<dbReference type="PROSITE" id="PS00854">
    <property type="entry name" value="PROTEASOME_BETA_1"/>
    <property type="match status" value="1"/>
</dbReference>
<dbReference type="PROSITE" id="PS51476">
    <property type="entry name" value="PROTEASOME_BETA_2"/>
    <property type="match status" value="1"/>
</dbReference>
<protein>
    <recommendedName>
        <fullName evidence="1">Proteasome subunit beta</fullName>
        <ecNumber evidence="1">3.4.25.1</ecNumber>
    </recommendedName>
    <alternativeName>
        <fullName evidence="1">20S proteasome beta subunit</fullName>
    </alternativeName>
    <alternativeName>
        <fullName evidence="1">Proteasome core protein PsmB</fullName>
    </alternativeName>
</protein>
<keyword id="KW-0068">Autocatalytic cleavage</keyword>
<keyword id="KW-0963">Cytoplasm</keyword>
<keyword id="KW-0378">Hydrolase</keyword>
<keyword id="KW-0645">Protease</keyword>
<keyword id="KW-0647">Proteasome</keyword>
<keyword id="KW-0888">Threonine protease</keyword>
<keyword id="KW-0865">Zymogen</keyword>
<organism>
    <name type="scientific">Methanocaldococcus sp. (strain FS406-22)</name>
    <dbReference type="NCBI Taxonomy" id="644281"/>
    <lineage>
        <taxon>Archaea</taxon>
        <taxon>Methanobacteriati</taxon>
        <taxon>Methanobacteriota</taxon>
        <taxon>Methanomada group</taxon>
        <taxon>Methanococci</taxon>
        <taxon>Methanococcales</taxon>
        <taxon>Methanocaldococcaceae</taxon>
        <taxon>Methanocaldococcus</taxon>
    </lineage>
</organism>
<name>PSB_METSF</name>
<evidence type="ECO:0000255" key="1">
    <source>
        <dbReference type="HAMAP-Rule" id="MF_02113"/>
    </source>
</evidence>
<sequence length="224" mass="24199">MDVMKGTTTVGLICDDAVILATDKRASLGNLVADKEAKKLYKIDDYIAMTIAGSVGDAQAIVRLLTAEAKLYKMRTGRNIPPLACATLLSNILHSSRVFPFLTQIIIGGYDLLEGAKLFSLDPLGGMNEEKTFTATGSGSPIAYGVLEAGYDREMSVEEGIKLAINALKSAMERDTFSGNGISLAVITKEGVKIFEDEEIEKILDGMKAKSKKKTTKRGRRKSK</sequence>
<reference key="1">
    <citation type="submission" date="2010-02" db="EMBL/GenBank/DDBJ databases">
        <title>Complete sequence of chromosome of Methanocaldococcus sp. FS406-22.</title>
        <authorList>
            <consortium name="US DOE Joint Genome Institute"/>
            <person name="Lucas S."/>
            <person name="Copeland A."/>
            <person name="Lapidus A."/>
            <person name="Cheng J.-F."/>
            <person name="Bruce D."/>
            <person name="Goodwin L."/>
            <person name="Pitluck S."/>
            <person name="Teshima H."/>
            <person name="Detter J.C."/>
            <person name="Han C."/>
            <person name="Tapia R."/>
            <person name="Larimer F."/>
            <person name="Land M."/>
            <person name="Hauser L."/>
            <person name="Kyrpides N."/>
            <person name="Mikhailova N."/>
            <person name="Sieprawska-Lupa M."/>
            <person name="Leigh J."/>
            <person name="Whitman W.B."/>
            <person name="Woyke T."/>
        </authorList>
    </citation>
    <scope>NUCLEOTIDE SEQUENCE [LARGE SCALE GENOMIC DNA]</scope>
    <source>
        <strain>FS406-22</strain>
    </source>
</reference>